<organism>
    <name type="scientific">Rattus norvegicus</name>
    <name type="common">Rat</name>
    <dbReference type="NCBI Taxonomy" id="10116"/>
    <lineage>
        <taxon>Eukaryota</taxon>
        <taxon>Metazoa</taxon>
        <taxon>Chordata</taxon>
        <taxon>Craniata</taxon>
        <taxon>Vertebrata</taxon>
        <taxon>Euteleostomi</taxon>
        <taxon>Mammalia</taxon>
        <taxon>Eutheria</taxon>
        <taxon>Euarchontoglires</taxon>
        <taxon>Glires</taxon>
        <taxon>Rodentia</taxon>
        <taxon>Myomorpha</taxon>
        <taxon>Muroidea</taxon>
        <taxon>Muridae</taxon>
        <taxon>Murinae</taxon>
        <taxon>Rattus</taxon>
    </lineage>
</organism>
<gene>
    <name type="primary">Drd5</name>
</gene>
<feature type="chain" id="PRO_0000069408" description="D(1B) dopamine receptor">
    <location>
        <begin position="1"/>
        <end position="475"/>
    </location>
</feature>
<feature type="topological domain" description="Extracellular" evidence="2">
    <location>
        <begin position="1"/>
        <end position="38"/>
    </location>
</feature>
<feature type="transmembrane region" description="Helical; Name=1" evidence="2">
    <location>
        <begin position="39"/>
        <end position="64"/>
    </location>
</feature>
<feature type="topological domain" description="Cytoplasmic" evidence="2">
    <location>
        <begin position="65"/>
        <end position="75"/>
    </location>
</feature>
<feature type="transmembrane region" description="Helical; Name=2" evidence="2">
    <location>
        <begin position="76"/>
        <end position="102"/>
    </location>
</feature>
<feature type="topological domain" description="Extracellular" evidence="2">
    <location>
        <begin position="103"/>
        <end position="111"/>
    </location>
</feature>
<feature type="transmembrane region" description="Helical; Name=3" evidence="2">
    <location>
        <begin position="112"/>
        <end position="134"/>
    </location>
</feature>
<feature type="topological domain" description="Cytoplasmic" evidence="2">
    <location>
        <begin position="135"/>
        <end position="153"/>
    </location>
</feature>
<feature type="transmembrane region" description="Helical; Name=4" evidence="2">
    <location>
        <begin position="154"/>
        <end position="179"/>
    </location>
</feature>
<feature type="topological domain" description="Extracellular" evidence="2">
    <location>
        <begin position="180"/>
        <end position="215"/>
    </location>
</feature>
<feature type="transmembrane region" description="Helical; Name=5" evidence="2">
    <location>
        <begin position="216"/>
        <end position="240"/>
    </location>
</feature>
<feature type="topological domain" description="Cytoplasmic" evidence="2">
    <location>
        <begin position="241"/>
        <end position="289"/>
    </location>
</feature>
<feature type="transmembrane region" description="Helical; Name=6" evidence="2">
    <location>
        <begin position="290"/>
        <end position="317"/>
    </location>
</feature>
<feature type="topological domain" description="Extracellular" evidence="2">
    <location>
        <begin position="318"/>
        <end position="335"/>
    </location>
</feature>
<feature type="transmembrane region" description="Helical; Name=7" evidence="2">
    <location>
        <begin position="336"/>
        <end position="357"/>
    </location>
</feature>
<feature type="topological domain" description="Cytoplasmic" evidence="2">
    <location>
        <begin position="358"/>
        <end position="475"/>
    </location>
</feature>
<feature type="region of interest" description="Disordered" evidence="4">
    <location>
        <begin position="415"/>
        <end position="443"/>
    </location>
</feature>
<feature type="lipid moiety-binding region" description="S-palmitoyl cysteine" evidence="1">
    <location>
        <position position="370"/>
    </location>
</feature>
<feature type="glycosylation site" description="N-linked (GlcNAc...) asparagine" evidence="2">
    <location>
        <position position="7"/>
    </location>
</feature>
<feature type="disulfide bond" evidence="3">
    <location>
        <begin position="111"/>
        <end position="211"/>
    </location>
</feature>
<keyword id="KW-1003">Cell membrane</keyword>
<keyword id="KW-1015">Disulfide bond</keyword>
<keyword id="KW-0297">G-protein coupled receptor</keyword>
<keyword id="KW-0325">Glycoprotein</keyword>
<keyword id="KW-0449">Lipoprotein</keyword>
<keyword id="KW-0472">Membrane</keyword>
<keyword id="KW-0564">Palmitate</keyword>
<keyword id="KW-0675">Receptor</keyword>
<keyword id="KW-1185">Reference proteome</keyword>
<keyword id="KW-0807">Transducer</keyword>
<keyword id="KW-0812">Transmembrane</keyword>
<keyword id="KW-1133">Transmembrane helix</keyword>
<evidence type="ECO:0000250" key="1"/>
<evidence type="ECO:0000255" key="2"/>
<evidence type="ECO:0000255" key="3">
    <source>
        <dbReference type="PROSITE-ProRule" id="PRU00521"/>
    </source>
</evidence>
<evidence type="ECO:0000256" key="4">
    <source>
        <dbReference type="SAM" id="MobiDB-lite"/>
    </source>
</evidence>
<name>DRD5_RAT</name>
<sequence>MLPPGRNRTAQPARLGLQRQLAQVDAPAGSATPLGPAQVVTAGLLTLLIVWTLLGNVLVCAAIVRSRHLRAKMTNIFIVSLAVSDLFVALLVMPWKAVAEVAGYWPFGTFCDIWVAFDIMCSTASILNLCIISVDRYWAISRPFRYERKMTQRVALVMVGLAWTLSILISFIPVQLNWHRDKAGSQGQEGLLSNGTPWEEGWELEGRTENCDSSLNRTYAISSSLISFYIPVAIMIVTYTRIYRIAQVQIRRISSLERAAEHAQSCRSRGAYEPDPSLRASIKKETKVFKTLSMIMGVFVCCWLPFFILNCMVPFCSSGDAEGPKTGFPCVSETTFDIFVWFGWANSSLNPIIYAFNADFRKVFAQLLGCSHFCFRTPVQTVNISNELISYNQDTVFHKEIATAYVHMIPNAVSSGDREVGEEEEEGPFDHMSQISPTTPDGDLAAESVWELDCEEEVSLGKISPLTPNCFDKTA</sequence>
<comment type="function">
    <text>Dopamine receptor whose activity is mediated by G proteins which activate adenylyl cyclase.</text>
</comment>
<comment type="subcellular location">
    <subcellularLocation>
        <location>Cell membrane</location>
        <topology>Multi-pass membrane protein</topology>
    </subcellularLocation>
</comment>
<comment type="tissue specificity">
    <text>Brain, in the lateral mammillary nuclei, the anterior pretectal nuclei, and several layers of the hippocampus.</text>
</comment>
<comment type="similarity">
    <text evidence="3">Belongs to the G-protein coupled receptor 1 family.</text>
</comment>
<accession>P25115</accession>
<reference key="1">
    <citation type="journal article" date="1991" name="Proc. Natl. Acad. Sci. U.S.A.">
        <title>Cloning, molecular characterization, and chromosomal assignment of a gene encoding a second D1 dopamine receptor subtype: differential expression pattern in rat brain compared with the D1A receptor.</title>
        <authorList>
            <person name="Tiberi M."/>
            <person name="Jarvie K.R."/>
            <person name="Silvia C."/>
            <person name="Falardeau P."/>
            <person name="Gingrich J.A."/>
            <person name="Godinot N."/>
            <person name="Bertrand L."/>
            <person name="Yang-Feng T.L."/>
            <person name="Fremeau R.T. Jr."/>
            <person name="Caron M.G."/>
        </authorList>
    </citation>
    <scope>NUCLEOTIDE SEQUENCE [GENOMIC DNA]</scope>
    <source>
        <strain>Sprague-Dawley</strain>
    </source>
</reference>
<proteinExistence type="evidence at transcript level"/>
<dbReference type="EMBL" id="M69118">
    <property type="protein sequence ID" value="AAA41072.1"/>
    <property type="molecule type" value="Genomic_DNA"/>
</dbReference>
<dbReference type="PIR" id="A41271">
    <property type="entry name" value="A41271"/>
</dbReference>
<dbReference type="RefSeq" id="NP_036900.1">
    <property type="nucleotide sequence ID" value="NM_012768.1"/>
</dbReference>
<dbReference type="SMR" id="P25115"/>
<dbReference type="BioGRID" id="247243">
    <property type="interactions" value="1"/>
</dbReference>
<dbReference type="CORUM" id="P25115"/>
<dbReference type="FunCoup" id="P25115">
    <property type="interactions" value="302"/>
</dbReference>
<dbReference type="STRING" id="10116.ENSRNOP00000007074"/>
<dbReference type="BindingDB" id="P25115"/>
<dbReference type="ChEMBL" id="CHEMBL2281"/>
<dbReference type="DrugCentral" id="P25115"/>
<dbReference type="CarbonylDB" id="P25115"/>
<dbReference type="GlyCosmos" id="P25115">
    <property type="glycosylation" value="1 site, No reported glycans"/>
</dbReference>
<dbReference type="GlyGen" id="P25115">
    <property type="glycosylation" value="2 sites"/>
</dbReference>
<dbReference type="PhosphoSitePlus" id="P25115"/>
<dbReference type="PaxDb" id="10116-ENSRNOP00000007074"/>
<dbReference type="GeneID" id="25195"/>
<dbReference type="KEGG" id="rno:25195"/>
<dbReference type="AGR" id="RGD:2523"/>
<dbReference type="CTD" id="1816"/>
<dbReference type="RGD" id="2523">
    <property type="gene designation" value="Drd5"/>
</dbReference>
<dbReference type="eggNOG" id="KOG3656">
    <property type="taxonomic scope" value="Eukaryota"/>
</dbReference>
<dbReference type="InParanoid" id="P25115"/>
<dbReference type="PhylomeDB" id="P25115"/>
<dbReference type="Reactome" id="R-RNO-390651">
    <property type="pathway name" value="Dopamine receptors"/>
</dbReference>
<dbReference type="PRO" id="PR:P25115"/>
<dbReference type="Proteomes" id="UP000002494">
    <property type="component" value="Unplaced"/>
</dbReference>
<dbReference type="GO" id="GO:0030424">
    <property type="term" value="C:axon"/>
    <property type="evidence" value="ECO:0000314"/>
    <property type="project" value="RGD"/>
</dbReference>
<dbReference type="GO" id="GO:0031526">
    <property type="term" value="C:brush border membrane"/>
    <property type="evidence" value="ECO:0000314"/>
    <property type="project" value="RGD"/>
</dbReference>
<dbReference type="GO" id="GO:0060170">
    <property type="term" value="C:ciliary membrane"/>
    <property type="evidence" value="ECO:0000266"/>
    <property type="project" value="RGD"/>
</dbReference>
<dbReference type="GO" id="GO:0005929">
    <property type="term" value="C:cilium"/>
    <property type="evidence" value="ECO:0000266"/>
    <property type="project" value="RGD"/>
</dbReference>
<dbReference type="GO" id="GO:0030425">
    <property type="term" value="C:dendrite"/>
    <property type="evidence" value="ECO:0000314"/>
    <property type="project" value="RGD"/>
</dbReference>
<dbReference type="GO" id="GO:0043197">
    <property type="term" value="C:dendritic spine"/>
    <property type="evidence" value="ECO:0000314"/>
    <property type="project" value="RGD"/>
</dbReference>
<dbReference type="GO" id="GO:0098978">
    <property type="term" value="C:glutamatergic synapse"/>
    <property type="evidence" value="ECO:0000314"/>
    <property type="project" value="SynGO"/>
</dbReference>
<dbReference type="GO" id="GO:0043025">
    <property type="term" value="C:neuronal cell body"/>
    <property type="evidence" value="ECO:0000314"/>
    <property type="project" value="RGD"/>
</dbReference>
<dbReference type="GO" id="GO:0097730">
    <property type="term" value="C:non-motile cilium"/>
    <property type="evidence" value="ECO:0000266"/>
    <property type="project" value="RGD"/>
</dbReference>
<dbReference type="GO" id="GO:0005886">
    <property type="term" value="C:plasma membrane"/>
    <property type="evidence" value="ECO:0000266"/>
    <property type="project" value="RGD"/>
</dbReference>
<dbReference type="GO" id="GO:0098839">
    <property type="term" value="C:postsynaptic density membrane"/>
    <property type="evidence" value="ECO:0000314"/>
    <property type="project" value="SynGO"/>
</dbReference>
<dbReference type="GO" id="GO:0035240">
    <property type="term" value="F:dopamine binding"/>
    <property type="evidence" value="ECO:0000266"/>
    <property type="project" value="RGD"/>
</dbReference>
<dbReference type="GO" id="GO:0004952">
    <property type="term" value="F:dopamine neurotransmitter receptor activity"/>
    <property type="evidence" value="ECO:0000314"/>
    <property type="project" value="MGI"/>
</dbReference>
<dbReference type="GO" id="GO:0001588">
    <property type="term" value="F:dopamine neurotransmitter receptor activity, coupled via Gs"/>
    <property type="evidence" value="ECO:0000266"/>
    <property type="project" value="RGD"/>
</dbReference>
<dbReference type="GO" id="GO:0004930">
    <property type="term" value="F:G protein-coupled receptor activity"/>
    <property type="evidence" value="ECO:0000318"/>
    <property type="project" value="GO_Central"/>
</dbReference>
<dbReference type="GO" id="GO:0001965">
    <property type="term" value="F:G-protein alpha-subunit binding"/>
    <property type="evidence" value="ECO:0000353"/>
    <property type="project" value="RGD"/>
</dbReference>
<dbReference type="GO" id="GO:0071880">
    <property type="term" value="P:adenylate cyclase-activating adrenergic receptor signaling pathway"/>
    <property type="evidence" value="ECO:0000318"/>
    <property type="project" value="GO_Central"/>
</dbReference>
<dbReference type="GO" id="GO:0007191">
    <property type="term" value="P:adenylate cyclase-activating dopamine receptor signaling pathway"/>
    <property type="evidence" value="ECO:0000315"/>
    <property type="project" value="RGD"/>
</dbReference>
<dbReference type="GO" id="GO:0007189">
    <property type="term" value="P:adenylate cyclase-activating G protein-coupled receptor signaling pathway"/>
    <property type="evidence" value="ECO:0000314"/>
    <property type="project" value="MGI"/>
</dbReference>
<dbReference type="GO" id="GO:0008306">
    <property type="term" value="P:associative learning"/>
    <property type="evidence" value="ECO:0000266"/>
    <property type="project" value="RGD"/>
</dbReference>
<dbReference type="GO" id="GO:0071870">
    <property type="term" value="P:cellular response to catecholamine stimulus"/>
    <property type="evidence" value="ECO:0000266"/>
    <property type="project" value="RGD"/>
</dbReference>
<dbReference type="GO" id="GO:0007212">
    <property type="term" value="P:G protein-coupled dopamine receptor signaling pathway"/>
    <property type="evidence" value="ECO:0000314"/>
    <property type="project" value="RGD"/>
</dbReference>
<dbReference type="GO" id="GO:0060292">
    <property type="term" value="P:long-term synaptic depression"/>
    <property type="evidence" value="ECO:0000266"/>
    <property type="project" value="RGD"/>
</dbReference>
<dbReference type="GO" id="GO:0007617">
    <property type="term" value="P:mating behavior"/>
    <property type="evidence" value="ECO:0000266"/>
    <property type="project" value="RGD"/>
</dbReference>
<dbReference type="GO" id="GO:0045776">
    <property type="term" value="P:negative regulation of blood pressure"/>
    <property type="evidence" value="ECO:0000266"/>
    <property type="project" value="RGD"/>
</dbReference>
<dbReference type="GO" id="GO:0030336">
    <property type="term" value="P:negative regulation of cell migration"/>
    <property type="evidence" value="ECO:0000315"/>
    <property type="project" value="RGD"/>
</dbReference>
<dbReference type="GO" id="GO:0001994">
    <property type="term" value="P:norepinephrine-epinephrine vasoconstriction involved in regulation of systemic arterial blood pressure"/>
    <property type="evidence" value="ECO:0000266"/>
    <property type="project" value="RGD"/>
</dbReference>
<dbReference type="GO" id="GO:0043410">
    <property type="term" value="P:positive regulation of MAPK cascade"/>
    <property type="evidence" value="ECO:0000318"/>
    <property type="project" value="GO_Central"/>
</dbReference>
<dbReference type="GO" id="GO:0072593">
    <property type="term" value="P:reactive oxygen species metabolic process"/>
    <property type="evidence" value="ECO:0000266"/>
    <property type="project" value="RGD"/>
</dbReference>
<dbReference type="GO" id="GO:0045924">
    <property type="term" value="P:regulation of female receptivity"/>
    <property type="evidence" value="ECO:0000266"/>
    <property type="project" value="RGD"/>
</dbReference>
<dbReference type="GO" id="GO:0099072">
    <property type="term" value="P:regulation of postsynaptic membrane neurotransmitter receptor levels"/>
    <property type="evidence" value="ECO:0000314"/>
    <property type="project" value="SynGO"/>
</dbReference>
<dbReference type="GO" id="GO:0001992">
    <property type="term" value="P:regulation of systemic arterial blood pressure by vasopressin"/>
    <property type="evidence" value="ECO:0000266"/>
    <property type="project" value="RGD"/>
</dbReference>
<dbReference type="GO" id="GO:0001975">
    <property type="term" value="P:response to amphetamine"/>
    <property type="evidence" value="ECO:0000266"/>
    <property type="project" value="RGD"/>
</dbReference>
<dbReference type="GO" id="GO:0042220">
    <property type="term" value="P:response to cocaine"/>
    <property type="evidence" value="ECO:0000266"/>
    <property type="project" value="RGD"/>
</dbReference>
<dbReference type="GO" id="GO:0046960">
    <property type="term" value="P:sensitization"/>
    <property type="evidence" value="ECO:0000266"/>
    <property type="project" value="RGD"/>
</dbReference>
<dbReference type="GO" id="GO:0019226">
    <property type="term" value="P:transmission of nerve impulse"/>
    <property type="evidence" value="ECO:0000266"/>
    <property type="project" value="RGD"/>
</dbReference>
<dbReference type="GO" id="GO:0008542">
    <property type="term" value="P:visual learning"/>
    <property type="evidence" value="ECO:0000315"/>
    <property type="project" value="RGD"/>
</dbReference>
<dbReference type="GO" id="GO:0042060">
    <property type="term" value="P:wound healing"/>
    <property type="evidence" value="ECO:0000266"/>
    <property type="project" value="RGD"/>
</dbReference>
<dbReference type="FunFam" id="1.20.1070.10:FF:000045">
    <property type="entry name" value="D(1A) dopamine receptor"/>
    <property type="match status" value="1"/>
</dbReference>
<dbReference type="Gene3D" id="1.20.1070.10">
    <property type="entry name" value="Rhodopsin 7-helix transmembrane proteins"/>
    <property type="match status" value="1"/>
</dbReference>
<dbReference type="InterPro" id="IPR000497">
    <property type="entry name" value="Dopamine_D5_rcpt"/>
</dbReference>
<dbReference type="InterPro" id="IPR000929">
    <property type="entry name" value="Dopamine_rcpt"/>
</dbReference>
<dbReference type="InterPro" id="IPR000276">
    <property type="entry name" value="GPCR_Rhodpsn"/>
</dbReference>
<dbReference type="InterPro" id="IPR017452">
    <property type="entry name" value="GPCR_Rhodpsn_7TM"/>
</dbReference>
<dbReference type="PANTHER" id="PTHR24248">
    <property type="entry name" value="ADRENERGIC RECEPTOR-RELATED G-PROTEIN COUPLED RECEPTOR"/>
    <property type="match status" value="1"/>
</dbReference>
<dbReference type="PANTHER" id="PTHR24248:SF136">
    <property type="entry name" value="D(1B) DOPAMINE RECEPTOR"/>
    <property type="match status" value="1"/>
</dbReference>
<dbReference type="Pfam" id="PF00001">
    <property type="entry name" value="7tm_1"/>
    <property type="match status" value="1"/>
</dbReference>
<dbReference type="PRINTS" id="PR00566">
    <property type="entry name" value="DOPAMINED1BR"/>
</dbReference>
<dbReference type="PRINTS" id="PR00242">
    <property type="entry name" value="DOPAMINER"/>
</dbReference>
<dbReference type="PRINTS" id="PR00237">
    <property type="entry name" value="GPCRRHODOPSN"/>
</dbReference>
<dbReference type="SMART" id="SM01381">
    <property type="entry name" value="7TM_GPCR_Srsx"/>
    <property type="match status" value="1"/>
</dbReference>
<dbReference type="SUPFAM" id="SSF81321">
    <property type="entry name" value="Family A G protein-coupled receptor-like"/>
    <property type="match status" value="1"/>
</dbReference>
<dbReference type="PROSITE" id="PS00237">
    <property type="entry name" value="G_PROTEIN_RECEP_F1_1"/>
    <property type="match status" value="1"/>
</dbReference>
<dbReference type="PROSITE" id="PS50262">
    <property type="entry name" value="G_PROTEIN_RECEP_F1_2"/>
    <property type="match status" value="1"/>
</dbReference>
<protein>
    <recommendedName>
        <fullName>D(1B) dopamine receptor</fullName>
    </recommendedName>
    <alternativeName>
        <fullName>D(5) dopamine receptor</fullName>
    </alternativeName>
    <alternativeName>
        <fullName>Dopamine D5 receptor</fullName>
    </alternativeName>
</protein>